<keyword id="KW-0067">ATP-binding</keyword>
<keyword id="KW-0963">Cytoplasm</keyword>
<keyword id="KW-0436">Ligase</keyword>
<keyword id="KW-0547">Nucleotide-binding</keyword>
<keyword id="KW-0566">Pantothenate biosynthesis</keyword>
<accession>Q14GL0</accession>
<protein>
    <recommendedName>
        <fullName evidence="1">Pantothenate synthetase</fullName>
        <shortName evidence="1">PS</shortName>
        <ecNumber evidence="1">6.3.2.1</ecNumber>
    </recommendedName>
    <alternativeName>
        <fullName evidence="1">Pantoate--beta-alanine ligase</fullName>
    </alternativeName>
    <alternativeName>
        <fullName evidence="1">Pantoate-activating enzyme</fullName>
    </alternativeName>
</protein>
<comment type="function">
    <text evidence="1">Catalyzes the condensation of pantoate with beta-alanine in an ATP-dependent reaction via a pantoyl-adenylate intermediate.</text>
</comment>
<comment type="catalytic activity">
    <reaction evidence="1">
        <text>(R)-pantoate + beta-alanine + ATP = (R)-pantothenate + AMP + diphosphate + H(+)</text>
        <dbReference type="Rhea" id="RHEA:10912"/>
        <dbReference type="ChEBI" id="CHEBI:15378"/>
        <dbReference type="ChEBI" id="CHEBI:15980"/>
        <dbReference type="ChEBI" id="CHEBI:29032"/>
        <dbReference type="ChEBI" id="CHEBI:30616"/>
        <dbReference type="ChEBI" id="CHEBI:33019"/>
        <dbReference type="ChEBI" id="CHEBI:57966"/>
        <dbReference type="ChEBI" id="CHEBI:456215"/>
        <dbReference type="EC" id="6.3.2.1"/>
    </reaction>
</comment>
<comment type="pathway">
    <text evidence="1">Cofactor biosynthesis; (R)-pantothenate biosynthesis; (R)-pantothenate from (R)-pantoate and beta-alanine: step 1/1.</text>
</comment>
<comment type="subunit">
    <text evidence="1">Homodimer.</text>
</comment>
<comment type="subcellular location">
    <subcellularLocation>
        <location evidence="1">Cytoplasm</location>
    </subcellularLocation>
</comment>
<comment type="miscellaneous">
    <text evidence="1">The reaction proceeds by a bi uni uni bi ping pong mechanism.</text>
</comment>
<comment type="similarity">
    <text evidence="1">Belongs to the pantothenate synthetase family.</text>
</comment>
<name>PANC_FRAT1</name>
<organism>
    <name type="scientific">Francisella tularensis subsp. tularensis (strain FSC 198)</name>
    <dbReference type="NCBI Taxonomy" id="393115"/>
    <lineage>
        <taxon>Bacteria</taxon>
        <taxon>Pseudomonadati</taxon>
        <taxon>Pseudomonadota</taxon>
        <taxon>Gammaproteobacteria</taxon>
        <taxon>Thiotrichales</taxon>
        <taxon>Francisellaceae</taxon>
        <taxon>Francisella</taxon>
    </lineage>
</organism>
<feature type="chain" id="PRO_0000305451" description="Pantothenate synthetase">
    <location>
        <begin position="1"/>
        <end position="261"/>
    </location>
</feature>
<feature type="active site" description="Proton donor" evidence="1">
    <location>
        <position position="36"/>
    </location>
</feature>
<feature type="binding site" evidence="1">
    <location>
        <begin position="29"/>
        <end position="36"/>
    </location>
    <ligand>
        <name>ATP</name>
        <dbReference type="ChEBI" id="CHEBI:30616"/>
    </ligand>
</feature>
<feature type="binding site" evidence="1">
    <location>
        <position position="60"/>
    </location>
    <ligand>
        <name>(R)-pantoate</name>
        <dbReference type="ChEBI" id="CHEBI:15980"/>
    </ligand>
</feature>
<feature type="binding site" evidence="1">
    <location>
        <position position="60"/>
    </location>
    <ligand>
        <name>beta-alanine</name>
        <dbReference type="ChEBI" id="CHEBI:57966"/>
    </ligand>
</feature>
<feature type="binding site" evidence="1">
    <location>
        <begin position="147"/>
        <end position="150"/>
    </location>
    <ligand>
        <name>ATP</name>
        <dbReference type="ChEBI" id="CHEBI:30616"/>
    </ligand>
</feature>
<feature type="binding site" evidence="1">
    <location>
        <position position="153"/>
    </location>
    <ligand>
        <name>(R)-pantoate</name>
        <dbReference type="ChEBI" id="CHEBI:15980"/>
    </ligand>
</feature>
<feature type="binding site" evidence="1">
    <location>
        <begin position="184"/>
        <end position="187"/>
    </location>
    <ligand>
        <name>ATP</name>
        <dbReference type="ChEBI" id="CHEBI:30616"/>
    </ligand>
</feature>
<dbReference type="EC" id="6.3.2.1" evidence="1"/>
<dbReference type="EMBL" id="AM286280">
    <property type="protein sequence ID" value="CAL09406.1"/>
    <property type="molecule type" value="Genomic_DNA"/>
</dbReference>
<dbReference type="RefSeq" id="WP_003022190.1">
    <property type="nucleotide sequence ID" value="NC_008245.1"/>
</dbReference>
<dbReference type="SMR" id="Q14GL0"/>
<dbReference type="KEGG" id="ftf:FTF1390"/>
<dbReference type="HOGENOM" id="CLU_047148_0_2_6"/>
<dbReference type="UniPathway" id="UPA00028">
    <property type="reaction ID" value="UER00005"/>
</dbReference>
<dbReference type="GO" id="GO:0005829">
    <property type="term" value="C:cytosol"/>
    <property type="evidence" value="ECO:0007669"/>
    <property type="project" value="TreeGrafter"/>
</dbReference>
<dbReference type="GO" id="GO:0005524">
    <property type="term" value="F:ATP binding"/>
    <property type="evidence" value="ECO:0007669"/>
    <property type="project" value="UniProtKB-KW"/>
</dbReference>
<dbReference type="GO" id="GO:0004592">
    <property type="term" value="F:pantoate-beta-alanine ligase activity"/>
    <property type="evidence" value="ECO:0007669"/>
    <property type="project" value="UniProtKB-UniRule"/>
</dbReference>
<dbReference type="GO" id="GO:0015940">
    <property type="term" value="P:pantothenate biosynthetic process"/>
    <property type="evidence" value="ECO:0007669"/>
    <property type="project" value="UniProtKB-UniRule"/>
</dbReference>
<dbReference type="Gene3D" id="3.40.50.620">
    <property type="entry name" value="HUPs"/>
    <property type="match status" value="1"/>
</dbReference>
<dbReference type="Gene3D" id="3.30.1300.10">
    <property type="entry name" value="Pantoate-beta-alanine ligase, C-terminal domain"/>
    <property type="match status" value="1"/>
</dbReference>
<dbReference type="HAMAP" id="MF_00158">
    <property type="entry name" value="PanC"/>
    <property type="match status" value="1"/>
</dbReference>
<dbReference type="InterPro" id="IPR004821">
    <property type="entry name" value="Cyt_trans-like"/>
</dbReference>
<dbReference type="InterPro" id="IPR003721">
    <property type="entry name" value="Pantoate_ligase"/>
</dbReference>
<dbReference type="InterPro" id="IPR042176">
    <property type="entry name" value="Pantoate_ligase_C"/>
</dbReference>
<dbReference type="InterPro" id="IPR014729">
    <property type="entry name" value="Rossmann-like_a/b/a_fold"/>
</dbReference>
<dbReference type="NCBIfam" id="TIGR00125">
    <property type="entry name" value="cyt_tran_rel"/>
    <property type="match status" value="1"/>
</dbReference>
<dbReference type="NCBIfam" id="TIGR00018">
    <property type="entry name" value="panC"/>
    <property type="match status" value="1"/>
</dbReference>
<dbReference type="PANTHER" id="PTHR21299">
    <property type="entry name" value="CYTIDYLATE KINASE/PANTOATE-BETA-ALANINE LIGASE"/>
    <property type="match status" value="1"/>
</dbReference>
<dbReference type="PANTHER" id="PTHR21299:SF1">
    <property type="entry name" value="PANTOATE--BETA-ALANINE LIGASE"/>
    <property type="match status" value="1"/>
</dbReference>
<dbReference type="Pfam" id="PF02569">
    <property type="entry name" value="Pantoate_ligase"/>
    <property type="match status" value="1"/>
</dbReference>
<dbReference type="SUPFAM" id="SSF52374">
    <property type="entry name" value="Nucleotidylyl transferase"/>
    <property type="match status" value="1"/>
</dbReference>
<evidence type="ECO:0000255" key="1">
    <source>
        <dbReference type="HAMAP-Rule" id="MF_00158"/>
    </source>
</evidence>
<sequence length="261" mass="29715">MIIADNIKQFHSIRNSLIKQQKIGFVPTMGALHNGHISLIKKAKSENDVVIVSIFVNPTQFNNPNDYQTYPNQLQQDIQILASLDVDVLFNPSEKDIYPDGNLLRIEPKLEIANILEGKSRPGHFSGMLTVVLKLLQITKPNNLYLGEKDYQQVMLIKQLVKDFFINTKIIVCPTQRQPSGLPLSSRNKNLTSTDIEIANKIYEILRQDDFSNLEELTNKINSTGAKLQYIQKLNNRIFLAFYIGKVRLIDNFLKETGPSC</sequence>
<reference key="1">
    <citation type="journal article" date="2007" name="PLoS ONE">
        <title>Genome sequencing shows that European isolates of Francisella tularensis subspecies tularensis are almost identical to US laboratory strain Schu S4.</title>
        <authorList>
            <person name="Chaudhuri R.R."/>
            <person name="Ren C.-P."/>
            <person name="Desmond L."/>
            <person name="Vincent G.A."/>
            <person name="Silman N.J."/>
            <person name="Brehm J.K."/>
            <person name="Elmore M.J."/>
            <person name="Hudson M.J."/>
            <person name="Forsman M."/>
            <person name="Isherwood K.E."/>
            <person name="Gurycova D."/>
            <person name="Minton N.P."/>
            <person name="Titball R.W."/>
            <person name="Pallen M.J."/>
            <person name="Vipond R."/>
        </authorList>
    </citation>
    <scope>NUCLEOTIDE SEQUENCE [LARGE SCALE GENOMIC DNA]</scope>
    <source>
        <strain>FSC 198</strain>
    </source>
</reference>
<proteinExistence type="inferred from homology"/>
<gene>
    <name evidence="1" type="primary">panC</name>
    <name type="ordered locus">FTF1390</name>
</gene>